<gene>
    <name evidence="6" type="primary">MET2</name>
    <name evidence="8" type="ORF">CNAG_05122</name>
</gene>
<dbReference type="EC" id="2.3.1.31" evidence="5"/>
<dbReference type="EMBL" id="CP003823">
    <property type="protein sequence ID" value="AFR94387.1"/>
    <property type="molecule type" value="Genomic_DNA"/>
</dbReference>
<dbReference type="RefSeq" id="XP_012048726.1">
    <property type="nucleotide sequence ID" value="XM_012193336.1"/>
</dbReference>
<dbReference type="GeneID" id="23888469"/>
<dbReference type="KEGG" id="cng:CNAG_05122"/>
<dbReference type="VEuPathDB" id="FungiDB:CNAG_05122"/>
<dbReference type="HOGENOM" id="CLU_028760_5_0_1"/>
<dbReference type="OrthoDB" id="6902at5206"/>
<dbReference type="UniPathway" id="UPA00051">
    <property type="reaction ID" value="UER00074"/>
</dbReference>
<dbReference type="Proteomes" id="UP000010091">
    <property type="component" value="Chromosome 4"/>
</dbReference>
<dbReference type="GO" id="GO:0005737">
    <property type="term" value="C:cytoplasm"/>
    <property type="evidence" value="ECO:0007669"/>
    <property type="project" value="UniProtKB-SubCell"/>
</dbReference>
<dbReference type="GO" id="GO:0004414">
    <property type="term" value="F:homoserine O-acetyltransferase activity"/>
    <property type="evidence" value="ECO:0000314"/>
    <property type="project" value="UniProtKB"/>
</dbReference>
<dbReference type="GO" id="GO:0071266">
    <property type="term" value="P:'de novo' L-methionine biosynthetic process"/>
    <property type="evidence" value="ECO:0000314"/>
    <property type="project" value="UniProtKB"/>
</dbReference>
<dbReference type="GO" id="GO:0009092">
    <property type="term" value="P:homoserine metabolic process"/>
    <property type="evidence" value="ECO:0000314"/>
    <property type="project" value="UniProtKB"/>
</dbReference>
<dbReference type="Gene3D" id="3.40.50.1820">
    <property type="entry name" value="alpha/beta hydrolase"/>
    <property type="match status" value="1"/>
</dbReference>
<dbReference type="HAMAP" id="MF_00296">
    <property type="entry name" value="MetX_acyltransf"/>
    <property type="match status" value="1"/>
</dbReference>
<dbReference type="InterPro" id="IPR000073">
    <property type="entry name" value="AB_hydrolase_1"/>
</dbReference>
<dbReference type="InterPro" id="IPR029058">
    <property type="entry name" value="AB_hydrolase_fold"/>
</dbReference>
<dbReference type="InterPro" id="IPR008220">
    <property type="entry name" value="HAT_MetX-like"/>
</dbReference>
<dbReference type="NCBIfam" id="TIGR01392">
    <property type="entry name" value="homoserO_Ac_trn"/>
    <property type="match status" value="1"/>
</dbReference>
<dbReference type="PANTHER" id="PTHR32268">
    <property type="entry name" value="HOMOSERINE O-ACETYLTRANSFERASE"/>
    <property type="match status" value="1"/>
</dbReference>
<dbReference type="PANTHER" id="PTHR32268:SF11">
    <property type="entry name" value="HOMOSERINE O-ACETYLTRANSFERASE"/>
    <property type="match status" value="1"/>
</dbReference>
<dbReference type="Pfam" id="PF00561">
    <property type="entry name" value="Abhydrolase_1"/>
    <property type="match status" value="1"/>
</dbReference>
<dbReference type="PIRSF" id="PIRSF000443">
    <property type="entry name" value="Homoser_Ac_trans"/>
    <property type="match status" value="1"/>
</dbReference>
<dbReference type="SUPFAM" id="SSF53474">
    <property type="entry name" value="alpha/beta-Hydrolases"/>
    <property type="match status" value="1"/>
</dbReference>
<accession>J9VIY8</accession>
<protein>
    <recommendedName>
        <fullName evidence="7">Homoserine O-acetyltransferase</fullName>
        <ecNumber evidence="5">2.3.1.31</ecNumber>
    </recommendedName>
</protein>
<feature type="chain" id="PRO_0000461581" description="Homoserine O-acetyltransferase">
    <location>
        <begin position="1"/>
        <end position="528"/>
    </location>
</feature>
<feature type="domain" description="AB hydrolase-1" evidence="2">
    <location>
        <begin position="60"/>
        <end position="245"/>
    </location>
</feature>
<feature type="region of interest" description="Disordered" evidence="4">
    <location>
        <begin position="250"/>
        <end position="335"/>
    </location>
</feature>
<feature type="region of interest" description="Disordered" evidence="4">
    <location>
        <begin position="388"/>
        <end position="413"/>
    </location>
</feature>
<feature type="compositionally biased region" description="Polar residues" evidence="4">
    <location>
        <begin position="273"/>
        <end position="282"/>
    </location>
</feature>
<feature type="compositionally biased region" description="Basic and acidic residues" evidence="4">
    <location>
        <begin position="295"/>
        <end position="304"/>
    </location>
</feature>
<feature type="compositionally biased region" description="Low complexity" evidence="4">
    <location>
        <begin position="389"/>
        <end position="409"/>
    </location>
</feature>
<feature type="active site" description="Nucleophile" evidence="1 3">
    <location>
        <position position="154"/>
    </location>
</feature>
<feature type="active site" evidence="1 3">
    <location>
        <position position="438"/>
    </location>
</feature>
<feature type="active site" evidence="1 3">
    <location>
        <position position="467"/>
    </location>
</feature>
<keyword id="KW-0012">Acyltransferase</keyword>
<keyword id="KW-0028">Amino-acid biosynthesis</keyword>
<keyword id="KW-0963">Cytoplasm</keyword>
<keyword id="KW-0486">Methionine biosynthesis</keyword>
<keyword id="KW-0808">Transferase</keyword>
<reference evidence="9" key="1">
    <citation type="journal article" date="2014" name="PLoS Genet.">
        <title>Analysis of the genome and transcriptome of Cryptococcus neoformans var. grubii reveals complex RNA expression and microevolution leading to virulence attenuation.</title>
        <authorList>
            <person name="Janbon G."/>
            <person name="Ormerod K.L."/>
            <person name="Paulet D."/>
            <person name="Byrnes E.J. III"/>
            <person name="Yadav V."/>
            <person name="Chatterjee G."/>
            <person name="Mullapudi N."/>
            <person name="Hon C.-C."/>
            <person name="Billmyre R.B."/>
            <person name="Brunel F."/>
            <person name="Bahn Y.-S."/>
            <person name="Chen W."/>
            <person name="Chen Y."/>
            <person name="Chow E.W.L."/>
            <person name="Coppee J.-Y."/>
            <person name="Floyd-Averette A."/>
            <person name="Gaillardin C."/>
            <person name="Gerik K.J."/>
            <person name="Goldberg J."/>
            <person name="Gonzalez-Hilarion S."/>
            <person name="Gujja S."/>
            <person name="Hamlin J.L."/>
            <person name="Hsueh Y.-P."/>
            <person name="Ianiri G."/>
            <person name="Jones S."/>
            <person name="Kodira C.D."/>
            <person name="Kozubowski L."/>
            <person name="Lam W."/>
            <person name="Marra M."/>
            <person name="Mesner L.D."/>
            <person name="Mieczkowski P.A."/>
            <person name="Moyrand F."/>
            <person name="Nielsen K."/>
            <person name="Proux C."/>
            <person name="Rossignol T."/>
            <person name="Schein J.E."/>
            <person name="Sun S."/>
            <person name="Wollschlaeger C."/>
            <person name="Wood I.A."/>
            <person name="Zeng Q."/>
            <person name="Neuveglise C."/>
            <person name="Newlon C.S."/>
            <person name="Perfect J.R."/>
            <person name="Lodge J.K."/>
            <person name="Idnurm A."/>
            <person name="Stajich J.E."/>
            <person name="Kronstad J.W."/>
            <person name="Sanyal K."/>
            <person name="Heitman J."/>
            <person name="Fraser J.A."/>
            <person name="Cuomo C.A."/>
            <person name="Dietrich F.S."/>
        </authorList>
    </citation>
    <scope>NUCLEOTIDE SEQUENCE [LARGE SCALE GENOMIC DNA]</scope>
    <source>
        <strain evidence="9">H99 / ATCC 208821 / CBS 10515 / FGSC 9487</strain>
    </source>
</reference>
<reference evidence="7" key="2">
    <citation type="journal article" date="2007" name="Antimicrob. Agents Chemother.">
        <title>Role of homoserine transacetylase as a new target for antifungal agents.</title>
        <authorList>
            <person name="Nazi I."/>
            <person name="Scott A."/>
            <person name="Sham A."/>
            <person name="Rossi L."/>
            <person name="Williamson P.R."/>
            <person name="Kronstad J.W."/>
            <person name="Wright G.D."/>
        </authorList>
    </citation>
    <scope>FUNCTION</scope>
    <scope>CATALYTIC ACTIVITY</scope>
    <scope>ACTIVITY REGULATION</scope>
    <scope>PATHWAY</scope>
    <scope>DISRUPTION PHENOTYPE</scope>
</reference>
<comment type="function">
    <text evidence="5">Commits homoserine to the methionine biosynthesis pathway by catalyzing its O-acetylation.</text>
</comment>
<comment type="catalytic activity">
    <reaction evidence="5">
        <text>L-homoserine + acetyl-CoA = O-acetyl-L-homoserine + CoA</text>
        <dbReference type="Rhea" id="RHEA:13701"/>
        <dbReference type="ChEBI" id="CHEBI:57287"/>
        <dbReference type="ChEBI" id="CHEBI:57288"/>
        <dbReference type="ChEBI" id="CHEBI:57476"/>
        <dbReference type="ChEBI" id="CHEBI:57716"/>
        <dbReference type="EC" id="2.3.1.31"/>
    </reaction>
    <physiologicalReaction direction="left-to-right" evidence="5">
        <dbReference type="Rhea" id="RHEA:13702"/>
    </physiologicalReaction>
</comment>
<comment type="activity regulation">
    <text evidence="5">Inhibited by 6-carbamoyl-3a,4,5,9b-tetrahydro-3H-cyclopenta[ c]quinoline-4-carboxylic acid (CTCQC).</text>
</comment>
<comment type="pathway">
    <text evidence="5">Amino-acid biosynthesis; L-methionine biosynthesis via de novo pathway; O-acetyl-L-homoserine from L-homoserine: step 1/1.</text>
</comment>
<comment type="subcellular location">
    <subcellularLocation>
        <location evidence="1">Cytoplasm</location>
    </subcellularLocation>
</comment>
<comment type="disruption phenotype">
    <text evidence="5">Methionine auxotrophy (PubMed:17353245). Attenuates virulence in a murine inhalation model of infection (PubMed:17353245).</text>
</comment>
<comment type="similarity">
    <text evidence="7">Belongs to the AB hydrolase superfamily. MetX family.</text>
</comment>
<name>MET2_CRYNH</name>
<evidence type="ECO:0000250" key="1">
    <source>
        <dbReference type="UniProtKB" id="O60062"/>
    </source>
</evidence>
<evidence type="ECO:0000255" key="2"/>
<evidence type="ECO:0000255" key="3">
    <source>
        <dbReference type="PIRSR" id="PIRSR000443-1"/>
    </source>
</evidence>
<evidence type="ECO:0000256" key="4">
    <source>
        <dbReference type="SAM" id="MobiDB-lite"/>
    </source>
</evidence>
<evidence type="ECO:0000269" key="5">
    <source>
    </source>
</evidence>
<evidence type="ECO:0000303" key="6">
    <source>
    </source>
</evidence>
<evidence type="ECO:0000305" key="7"/>
<evidence type="ECO:0000312" key="8">
    <source>
        <dbReference type="EMBL" id="AFR94387.1"/>
    </source>
</evidence>
<evidence type="ECO:0000312" key="9">
    <source>
        <dbReference type="Proteomes" id="UP000010091"/>
    </source>
</evidence>
<proteinExistence type="evidence at protein level"/>
<organism evidence="9">
    <name type="scientific">Cryptococcus neoformans var. grubii serotype A (strain H99 / ATCC 208821 / CBS 10515 / FGSC 9487)</name>
    <name type="common">Filobasidiella neoformans var. grubii</name>
    <dbReference type="NCBI Taxonomy" id="235443"/>
    <lineage>
        <taxon>Eukaryota</taxon>
        <taxon>Fungi</taxon>
        <taxon>Dikarya</taxon>
        <taxon>Basidiomycota</taxon>
        <taxon>Agaricomycotina</taxon>
        <taxon>Tremellomycetes</taxon>
        <taxon>Tremellales</taxon>
        <taxon>Cryptococcaceae</taxon>
        <taxon>Cryptococcus</taxon>
        <taxon>Cryptococcus neoformans species complex</taxon>
    </lineage>
</organism>
<sequence length="528" mass="57255">MSDNTPTPQKNPDTNPYASLISQQIAIIPSFTLESGVTLNNVPVAYKTWGKLNEKADNCLVICHALTGSADVEDWWGPLLGLNKAFDPTRFFIFCGNVIGSPYGTISSVTTNPETGKPFGPEMPGSSVKDDVRLHYIILKSLGVRSVAAVVGGSMGGMTVLEYPLNTPPGFVRAIIPLATSARHSAWCISWGEAQRQSIYSDPDYKDGYYYEIEEEGGKVDLARQPARGLAAARMAALLTYRSRDSFESRFGRRAGGGKSSVPKGGVRIMGGQETTDPSVPSESDLAAKSPSWRAWREHNDGHRSAGARPISRSGSEGPAHREGDAAQAEVVKTQDVKANGNKIGTGGEAPPKIFSAQSYLRYQGDKFTGRFDANCYIHITRKLDTHDLSAPSRDTSLSSLSSGLPSSPDATEEELNARLIHALSLEPPALVIGIESDGLFTTSEQRELAAGIPDAELVVIPSPDGHDGFLLEFEAINGWVEGWLKRKMPEFYERRVINPEEYVQGEEGFGIKKESVFGEAEADVTRW</sequence>